<reference key="1">
    <citation type="journal article" date="1999" name="Biosci. Biotechnol. Biochem.">
        <title>Sequence analysis of a 32-kb region including the major ribosomal protein gene clusters from alkaliphilic Bacillus sp. strain C-125.</title>
        <authorList>
            <person name="Takami H."/>
            <person name="Takaki Y."/>
            <person name="Nakasone K."/>
            <person name="Hirama C."/>
            <person name="Inoue A."/>
            <person name="Horikoshi K."/>
        </authorList>
    </citation>
    <scope>NUCLEOTIDE SEQUENCE [GENOMIC DNA]</scope>
    <source>
        <strain>ATCC BAA-125 / DSM 18197 / FERM 7344 / JCM 9153 / C-125</strain>
    </source>
</reference>
<reference key="2">
    <citation type="journal article" date="2000" name="Nucleic Acids Res.">
        <title>Complete genome sequence of the alkaliphilic bacterium Bacillus halodurans and genomic sequence comparison with Bacillus subtilis.</title>
        <authorList>
            <person name="Takami H."/>
            <person name="Nakasone K."/>
            <person name="Takaki Y."/>
            <person name="Maeno G."/>
            <person name="Sasaki R."/>
            <person name="Masui N."/>
            <person name="Fuji F."/>
            <person name="Hirama C."/>
            <person name="Nakamura Y."/>
            <person name="Ogasawara N."/>
            <person name="Kuhara S."/>
            <person name="Horikoshi K."/>
        </authorList>
    </citation>
    <scope>NUCLEOTIDE SEQUENCE [LARGE SCALE GENOMIC DNA]</scope>
    <source>
        <strain>ATCC BAA-125 / DSM 18197 / FERM 7344 / JCM 9153 / C-125</strain>
    </source>
</reference>
<protein>
    <recommendedName>
        <fullName evidence="1">Large ribosomal subunit protein uL18</fullName>
    </recommendedName>
    <alternativeName>
        <fullName evidence="2">50S ribosomal protein L18</fullName>
    </alternativeName>
</protein>
<keyword id="KW-1185">Reference proteome</keyword>
<keyword id="KW-0687">Ribonucleoprotein</keyword>
<keyword id="KW-0689">Ribosomal protein</keyword>
<keyword id="KW-0694">RNA-binding</keyword>
<keyword id="KW-0699">rRNA-binding</keyword>
<sequence length="120" mass="13211">MITKPIKNVARKKRHAHVRRTITGTPERPRLNVFRSSKHIYAQLIDDVNGVTVAAASSLDKELKLENGGNVEAAKKVGELVAKRALEKGYKTIVFDRGGYVYHGRVASLADAAREAGLQF</sequence>
<evidence type="ECO:0000255" key="1">
    <source>
        <dbReference type="HAMAP-Rule" id="MF_01337"/>
    </source>
</evidence>
<evidence type="ECO:0000305" key="2"/>
<feature type="chain" id="PRO_0000131211" description="Large ribosomal subunit protein uL18">
    <location>
        <begin position="1"/>
        <end position="120"/>
    </location>
</feature>
<gene>
    <name evidence="1" type="primary">rplR</name>
    <name type="ordered locus">BH0150</name>
</gene>
<name>RL18_HALH5</name>
<organism>
    <name type="scientific">Halalkalibacterium halodurans (strain ATCC BAA-125 / DSM 18197 / FERM 7344 / JCM 9153 / C-125)</name>
    <name type="common">Bacillus halodurans</name>
    <dbReference type="NCBI Taxonomy" id="272558"/>
    <lineage>
        <taxon>Bacteria</taxon>
        <taxon>Bacillati</taxon>
        <taxon>Bacillota</taxon>
        <taxon>Bacilli</taxon>
        <taxon>Bacillales</taxon>
        <taxon>Bacillaceae</taxon>
        <taxon>Halalkalibacterium (ex Joshi et al. 2022)</taxon>
    </lineage>
</organism>
<comment type="function">
    <text evidence="1">This is one of the proteins that bind and probably mediate the attachment of the 5S RNA into the large ribosomal subunit, where it forms part of the central protuberance.</text>
</comment>
<comment type="subunit">
    <text evidence="1">Part of the 50S ribosomal subunit; part of the 5S rRNA/L5/L18/L25 subcomplex. Contacts the 5S and 23S rRNAs.</text>
</comment>
<comment type="similarity">
    <text evidence="1">Belongs to the universal ribosomal protein uL18 family.</text>
</comment>
<proteinExistence type="inferred from homology"/>
<accession>Q9Z9J8</accession>
<accession>Q9JPX1</accession>
<dbReference type="EMBL" id="AB017508">
    <property type="protein sequence ID" value="BAA75287.1"/>
    <property type="molecule type" value="Genomic_DNA"/>
</dbReference>
<dbReference type="EMBL" id="BA000004">
    <property type="protein sequence ID" value="BAB03869.1"/>
    <property type="molecule type" value="Genomic_DNA"/>
</dbReference>
<dbReference type="PIR" id="T44399">
    <property type="entry name" value="T44399"/>
</dbReference>
<dbReference type="RefSeq" id="WP_010896333.1">
    <property type="nucleotide sequence ID" value="NC_002570.2"/>
</dbReference>
<dbReference type="SMR" id="Q9Z9J8"/>
<dbReference type="STRING" id="272558.gene:10725990"/>
<dbReference type="GeneID" id="87595691"/>
<dbReference type="KEGG" id="bha:BH0150"/>
<dbReference type="eggNOG" id="COG0256">
    <property type="taxonomic scope" value="Bacteria"/>
</dbReference>
<dbReference type="HOGENOM" id="CLU_098841_0_1_9"/>
<dbReference type="OrthoDB" id="9810939at2"/>
<dbReference type="Proteomes" id="UP000001258">
    <property type="component" value="Chromosome"/>
</dbReference>
<dbReference type="GO" id="GO:0022625">
    <property type="term" value="C:cytosolic large ribosomal subunit"/>
    <property type="evidence" value="ECO:0007669"/>
    <property type="project" value="TreeGrafter"/>
</dbReference>
<dbReference type="GO" id="GO:0008097">
    <property type="term" value="F:5S rRNA binding"/>
    <property type="evidence" value="ECO:0007669"/>
    <property type="project" value="TreeGrafter"/>
</dbReference>
<dbReference type="GO" id="GO:0003735">
    <property type="term" value="F:structural constituent of ribosome"/>
    <property type="evidence" value="ECO:0007669"/>
    <property type="project" value="InterPro"/>
</dbReference>
<dbReference type="GO" id="GO:0006412">
    <property type="term" value="P:translation"/>
    <property type="evidence" value="ECO:0007669"/>
    <property type="project" value="UniProtKB-UniRule"/>
</dbReference>
<dbReference type="CDD" id="cd00432">
    <property type="entry name" value="Ribosomal_L18_L5e"/>
    <property type="match status" value="1"/>
</dbReference>
<dbReference type="FunFam" id="3.30.420.100:FF:000001">
    <property type="entry name" value="50S ribosomal protein L18"/>
    <property type="match status" value="1"/>
</dbReference>
<dbReference type="Gene3D" id="3.30.420.100">
    <property type="match status" value="1"/>
</dbReference>
<dbReference type="HAMAP" id="MF_01337_B">
    <property type="entry name" value="Ribosomal_uL18_B"/>
    <property type="match status" value="1"/>
</dbReference>
<dbReference type="InterPro" id="IPR004389">
    <property type="entry name" value="Ribosomal_uL18_bac-type"/>
</dbReference>
<dbReference type="InterPro" id="IPR005484">
    <property type="entry name" value="Ribosomal_uL18_bac/euk"/>
</dbReference>
<dbReference type="NCBIfam" id="TIGR00060">
    <property type="entry name" value="L18_bact"/>
    <property type="match status" value="1"/>
</dbReference>
<dbReference type="PANTHER" id="PTHR12899">
    <property type="entry name" value="39S RIBOSOMAL PROTEIN L18, MITOCHONDRIAL"/>
    <property type="match status" value="1"/>
</dbReference>
<dbReference type="PANTHER" id="PTHR12899:SF3">
    <property type="entry name" value="LARGE RIBOSOMAL SUBUNIT PROTEIN UL18M"/>
    <property type="match status" value="1"/>
</dbReference>
<dbReference type="Pfam" id="PF00861">
    <property type="entry name" value="Ribosomal_L18p"/>
    <property type="match status" value="1"/>
</dbReference>
<dbReference type="SUPFAM" id="SSF53137">
    <property type="entry name" value="Translational machinery components"/>
    <property type="match status" value="1"/>
</dbReference>